<dbReference type="EC" id="2.7.4.6" evidence="1"/>
<dbReference type="EMBL" id="CP001016">
    <property type="protein sequence ID" value="ACB96042.1"/>
    <property type="molecule type" value="Genomic_DNA"/>
</dbReference>
<dbReference type="RefSeq" id="WP_012385395.1">
    <property type="nucleotide sequence ID" value="NC_010581.1"/>
</dbReference>
<dbReference type="SMR" id="B2II88"/>
<dbReference type="STRING" id="395963.Bind_2433"/>
<dbReference type="KEGG" id="bid:Bind_2433"/>
<dbReference type="eggNOG" id="COG0105">
    <property type="taxonomic scope" value="Bacteria"/>
</dbReference>
<dbReference type="HOGENOM" id="CLU_060216_8_1_5"/>
<dbReference type="OrthoDB" id="9801161at2"/>
<dbReference type="Proteomes" id="UP000001695">
    <property type="component" value="Chromosome"/>
</dbReference>
<dbReference type="GO" id="GO:0005737">
    <property type="term" value="C:cytoplasm"/>
    <property type="evidence" value="ECO:0007669"/>
    <property type="project" value="UniProtKB-SubCell"/>
</dbReference>
<dbReference type="GO" id="GO:0005524">
    <property type="term" value="F:ATP binding"/>
    <property type="evidence" value="ECO:0007669"/>
    <property type="project" value="UniProtKB-UniRule"/>
</dbReference>
<dbReference type="GO" id="GO:0046872">
    <property type="term" value="F:metal ion binding"/>
    <property type="evidence" value="ECO:0007669"/>
    <property type="project" value="UniProtKB-KW"/>
</dbReference>
<dbReference type="GO" id="GO:0004550">
    <property type="term" value="F:nucleoside diphosphate kinase activity"/>
    <property type="evidence" value="ECO:0007669"/>
    <property type="project" value="UniProtKB-UniRule"/>
</dbReference>
<dbReference type="GO" id="GO:0006241">
    <property type="term" value="P:CTP biosynthetic process"/>
    <property type="evidence" value="ECO:0007669"/>
    <property type="project" value="UniProtKB-UniRule"/>
</dbReference>
<dbReference type="GO" id="GO:0006183">
    <property type="term" value="P:GTP biosynthetic process"/>
    <property type="evidence" value="ECO:0007669"/>
    <property type="project" value="UniProtKB-UniRule"/>
</dbReference>
<dbReference type="GO" id="GO:0006228">
    <property type="term" value="P:UTP biosynthetic process"/>
    <property type="evidence" value="ECO:0007669"/>
    <property type="project" value="UniProtKB-UniRule"/>
</dbReference>
<dbReference type="CDD" id="cd04413">
    <property type="entry name" value="NDPk_I"/>
    <property type="match status" value="1"/>
</dbReference>
<dbReference type="FunFam" id="3.30.70.141:FF:000017">
    <property type="entry name" value="Nucleoside diphosphate kinase"/>
    <property type="match status" value="1"/>
</dbReference>
<dbReference type="Gene3D" id="3.30.70.141">
    <property type="entry name" value="Nucleoside diphosphate kinase-like domain"/>
    <property type="match status" value="1"/>
</dbReference>
<dbReference type="HAMAP" id="MF_00451">
    <property type="entry name" value="NDP_kinase"/>
    <property type="match status" value="1"/>
</dbReference>
<dbReference type="InterPro" id="IPR034907">
    <property type="entry name" value="NDK-like_dom"/>
</dbReference>
<dbReference type="InterPro" id="IPR036850">
    <property type="entry name" value="NDK-like_dom_sf"/>
</dbReference>
<dbReference type="InterPro" id="IPR001564">
    <property type="entry name" value="Nucleoside_diP_kinase"/>
</dbReference>
<dbReference type="InterPro" id="IPR023005">
    <property type="entry name" value="Nucleoside_diP_kinase_AS"/>
</dbReference>
<dbReference type="NCBIfam" id="NF001908">
    <property type="entry name" value="PRK00668.1"/>
    <property type="match status" value="1"/>
</dbReference>
<dbReference type="PANTHER" id="PTHR11349">
    <property type="entry name" value="NUCLEOSIDE DIPHOSPHATE KINASE"/>
    <property type="match status" value="1"/>
</dbReference>
<dbReference type="Pfam" id="PF00334">
    <property type="entry name" value="NDK"/>
    <property type="match status" value="1"/>
</dbReference>
<dbReference type="PRINTS" id="PR01243">
    <property type="entry name" value="NUCDPKINASE"/>
</dbReference>
<dbReference type="SMART" id="SM00562">
    <property type="entry name" value="NDK"/>
    <property type="match status" value="1"/>
</dbReference>
<dbReference type="SUPFAM" id="SSF54919">
    <property type="entry name" value="Nucleoside diphosphate kinase, NDK"/>
    <property type="match status" value="1"/>
</dbReference>
<dbReference type="PROSITE" id="PS00469">
    <property type="entry name" value="NDPK"/>
    <property type="match status" value="1"/>
</dbReference>
<dbReference type="PROSITE" id="PS51374">
    <property type="entry name" value="NDPK_LIKE"/>
    <property type="match status" value="1"/>
</dbReference>
<name>NDK_BEII9</name>
<protein>
    <recommendedName>
        <fullName evidence="1">Nucleoside diphosphate kinase</fullName>
        <shortName evidence="1">NDK</shortName>
        <shortName evidence="1">NDP kinase</shortName>
        <ecNumber evidence="1">2.7.4.6</ecNumber>
    </recommendedName>
    <alternativeName>
        <fullName evidence="1">Nucleoside-2-P kinase</fullName>
    </alternativeName>
</protein>
<proteinExistence type="inferred from homology"/>
<reference key="1">
    <citation type="journal article" date="2010" name="J. Bacteriol.">
        <title>Complete genome sequence of Beijerinckia indica subsp. indica.</title>
        <authorList>
            <person name="Tamas I."/>
            <person name="Dedysh S.N."/>
            <person name="Liesack W."/>
            <person name="Stott M.B."/>
            <person name="Alam M."/>
            <person name="Murrell J.C."/>
            <person name="Dunfield P.F."/>
        </authorList>
    </citation>
    <scope>NUCLEOTIDE SEQUENCE [LARGE SCALE GENOMIC DNA]</scope>
    <source>
        <strain>ATCC 9039 / DSM 1715 / NCIMB 8712</strain>
    </source>
</reference>
<sequence>MAIERTFSILKPDVTRRNLTGAVNALIEKAGLRIIAQKRVLITKAQAETFYAVHSARPFFGELVESMISGPVVVQVLEGEDAIKKYREVLGATDPAKADAGTIRKEFALSVGENSAHGSDAPETAAVEIAQWFAGNELVG</sequence>
<organism>
    <name type="scientific">Beijerinckia indica subsp. indica (strain ATCC 9039 / DSM 1715 / NCIMB 8712)</name>
    <dbReference type="NCBI Taxonomy" id="395963"/>
    <lineage>
        <taxon>Bacteria</taxon>
        <taxon>Pseudomonadati</taxon>
        <taxon>Pseudomonadota</taxon>
        <taxon>Alphaproteobacteria</taxon>
        <taxon>Hyphomicrobiales</taxon>
        <taxon>Beijerinckiaceae</taxon>
        <taxon>Beijerinckia</taxon>
    </lineage>
</organism>
<comment type="function">
    <text evidence="1">Major role in the synthesis of nucleoside triphosphates other than ATP. The ATP gamma phosphate is transferred to the NDP beta phosphate via a ping-pong mechanism, using a phosphorylated active-site intermediate.</text>
</comment>
<comment type="catalytic activity">
    <reaction evidence="1">
        <text>a 2'-deoxyribonucleoside 5'-diphosphate + ATP = a 2'-deoxyribonucleoside 5'-triphosphate + ADP</text>
        <dbReference type="Rhea" id="RHEA:44640"/>
        <dbReference type="ChEBI" id="CHEBI:30616"/>
        <dbReference type="ChEBI" id="CHEBI:61560"/>
        <dbReference type="ChEBI" id="CHEBI:73316"/>
        <dbReference type="ChEBI" id="CHEBI:456216"/>
        <dbReference type="EC" id="2.7.4.6"/>
    </reaction>
</comment>
<comment type="catalytic activity">
    <reaction evidence="1">
        <text>a ribonucleoside 5'-diphosphate + ATP = a ribonucleoside 5'-triphosphate + ADP</text>
        <dbReference type="Rhea" id="RHEA:18113"/>
        <dbReference type="ChEBI" id="CHEBI:30616"/>
        <dbReference type="ChEBI" id="CHEBI:57930"/>
        <dbReference type="ChEBI" id="CHEBI:61557"/>
        <dbReference type="ChEBI" id="CHEBI:456216"/>
        <dbReference type="EC" id="2.7.4.6"/>
    </reaction>
</comment>
<comment type="cofactor">
    <cofactor evidence="1">
        <name>Mg(2+)</name>
        <dbReference type="ChEBI" id="CHEBI:18420"/>
    </cofactor>
</comment>
<comment type="subunit">
    <text evidence="1">Homotetramer.</text>
</comment>
<comment type="subcellular location">
    <subcellularLocation>
        <location evidence="1">Cytoplasm</location>
    </subcellularLocation>
</comment>
<comment type="similarity">
    <text evidence="1">Belongs to the NDK family.</text>
</comment>
<evidence type="ECO:0000255" key="1">
    <source>
        <dbReference type="HAMAP-Rule" id="MF_00451"/>
    </source>
</evidence>
<accession>B2II88</accession>
<gene>
    <name evidence="1" type="primary">ndk</name>
    <name type="ordered locus">Bind_2433</name>
</gene>
<feature type="chain" id="PRO_1000124933" description="Nucleoside diphosphate kinase">
    <location>
        <begin position="1"/>
        <end position="140"/>
    </location>
</feature>
<feature type="active site" description="Pros-phosphohistidine intermediate" evidence="1">
    <location>
        <position position="117"/>
    </location>
</feature>
<feature type="binding site" evidence="1">
    <location>
        <position position="11"/>
    </location>
    <ligand>
        <name>ATP</name>
        <dbReference type="ChEBI" id="CHEBI:30616"/>
    </ligand>
</feature>
<feature type="binding site" evidence="1">
    <location>
        <position position="59"/>
    </location>
    <ligand>
        <name>ATP</name>
        <dbReference type="ChEBI" id="CHEBI:30616"/>
    </ligand>
</feature>
<feature type="binding site" evidence="1">
    <location>
        <position position="87"/>
    </location>
    <ligand>
        <name>ATP</name>
        <dbReference type="ChEBI" id="CHEBI:30616"/>
    </ligand>
</feature>
<feature type="binding site" evidence="1">
    <location>
        <position position="93"/>
    </location>
    <ligand>
        <name>ATP</name>
        <dbReference type="ChEBI" id="CHEBI:30616"/>
    </ligand>
</feature>
<feature type="binding site" evidence="1">
    <location>
        <position position="104"/>
    </location>
    <ligand>
        <name>ATP</name>
        <dbReference type="ChEBI" id="CHEBI:30616"/>
    </ligand>
</feature>
<feature type="binding site" evidence="1">
    <location>
        <position position="114"/>
    </location>
    <ligand>
        <name>ATP</name>
        <dbReference type="ChEBI" id="CHEBI:30616"/>
    </ligand>
</feature>
<keyword id="KW-0067">ATP-binding</keyword>
<keyword id="KW-0963">Cytoplasm</keyword>
<keyword id="KW-0418">Kinase</keyword>
<keyword id="KW-0460">Magnesium</keyword>
<keyword id="KW-0479">Metal-binding</keyword>
<keyword id="KW-0546">Nucleotide metabolism</keyword>
<keyword id="KW-0547">Nucleotide-binding</keyword>
<keyword id="KW-0597">Phosphoprotein</keyword>
<keyword id="KW-1185">Reference proteome</keyword>
<keyword id="KW-0808">Transferase</keyword>